<accession>P46287</accession>
<proteinExistence type="evidence at transcript level"/>
<organism>
    <name type="scientific">Medicago sativa</name>
    <name type="common">Alfalfa</name>
    <dbReference type="NCBI Taxonomy" id="3879"/>
    <lineage>
        <taxon>Eukaryota</taxon>
        <taxon>Viridiplantae</taxon>
        <taxon>Streptophyta</taxon>
        <taxon>Embryophyta</taxon>
        <taxon>Tracheophyta</taxon>
        <taxon>Spermatophyta</taxon>
        <taxon>Magnoliopsida</taxon>
        <taxon>eudicotyledons</taxon>
        <taxon>Gunneridae</taxon>
        <taxon>Pentapetalae</taxon>
        <taxon>rosids</taxon>
        <taxon>fabids</taxon>
        <taxon>Fabales</taxon>
        <taxon>Fabaceae</taxon>
        <taxon>Papilionoideae</taxon>
        <taxon>50 kb inversion clade</taxon>
        <taxon>NPAAA clade</taxon>
        <taxon>Hologalegina</taxon>
        <taxon>IRL clade</taxon>
        <taxon>Trifolieae</taxon>
        <taxon>Medicago</taxon>
    </lineage>
</organism>
<sequence>MASEKKLSNPMREIKVQKLVLNISVGESGDRLTRAAKVLEQLSGQTPVFSKARYTVRSFGIRRNEKIACYVTVRGDKAMQLLESGLKVKEYELLRRNFSDTGCFGFGIQEHIDLGIKYDPSTGIYGMDFFVVLERPGYRVGRRRRCKARVGIQHRVTKDDAMKWFQVKYEGVILNKSQAIV</sequence>
<feature type="chain" id="PRO_0000125098" description="Large ribosomal subunit protein uL5">
    <location>
        <begin position="1"/>
        <end position="181"/>
    </location>
</feature>
<gene>
    <name type="primary">RPL11</name>
    <name type="synonym">RPL5</name>
</gene>
<name>RL11_MEDSA</name>
<keyword id="KW-0963">Cytoplasm</keyword>
<keyword id="KW-0539">Nucleus</keyword>
<keyword id="KW-0687">Ribonucleoprotein</keyword>
<keyword id="KW-0689">Ribosomal protein</keyword>
<keyword id="KW-0694">RNA-binding</keyword>
<keyword id="KW-0699">rRNA-binding</keyword>
<reference key="1">
    <citation type="journal article" date="1994" name="Plant Mol. Biol.">
        <title>Cloning and expression of a cDNA encoding a cytoplasmic L5 ribosomal protein from alfalfa (Medicago sativa L.).</title>
        <authorList>
            <person name="Asemota O."/>
            <person name="Breda C."/>
            <person name="Sallaud C."/>
            <person name="El-Turk J."/>
            <person name="De Kozak I."/>
            <person name="Buffard D."/>
            <person name="Esnault R."/>
            <person name="Kondorosi A."/>
        </authorList>
    </citation>
    <scope>NUCLEOTIDE SEQUENCE [MRNA]</scope>
    <source>
        <strain>cv. Nagyszenasi</strain>
        <tissue>Leaf</tissue>
    </source>
</reference>
<dbReference type="EMBL" id="X78284">
    <property type="protein sequence ID" value="CAA55090.1"/>
    <property type="molecule type" value="mRNA"/>
</dbReference>
<dbReference type="PIR" id="S51819">
    <property type="entry name" value="S51819"/>
</dbReference>
<dbReference type="SMR" id="P46287"/>
<dbReference type="GO" id="GO:0005737">
    <property type="term" value="C:cytoplasm"/>
    <property type="evidence" value="ECO:0007669"/>
    <property type="project" value="UniProtKB-SubCell"/>
</dbReference>
<dbReference type="GO" id="GO:0005634">
    <property type="term" value="C:nucleus"/>
    <property type="evidence" value="ECO:0007669"/>
    <property type="project" value="UniProtKB-SubCell"/>
</dbReference>
<dbReference type="GO" id="GO:1990904">
    <property type="term" value="C:ribonucleoprotein complex"/>
    <property type="evidence" value="ECO:0007669"/>
    <property type="project" value="UniProtKB-KW"/>
</dbReference>
<dbReference type="GO" id="GO:0005840">
    <property type="term" value="C:ribosome"/>
    <property type="evidence" value="ECO:0007669"/>
    <property type="project" value="UniProtKB-KW"/>
</dbReference>
<dbReference type="GO" id="GO:0019843">
    <property type="term" value="F:rRNA binding"/>
    <property type="evidence" value="ECO:0007669"/>
    <property type="project" value="UniProtKB-KW"/>
</dbReference>
<dbReference type="GO" id="GO:0003735">
    <property type="term" value="F:structural constituent of ribosome"/>
    <property type="evidence" value="ECO:0007669"/>
    <property type="project" value="InterPro"/>
</dbReference>
<dbReference type="GO" id="GO:0006412">
    <property type="term" value="P:translation"/>
    <property type="evidence" value="ECO:0007669"/>
    <property type="project" value="InterPro"/>
</dbReference>
<dbReference type="FunFam" id="3.30.1440.10:FF:000002">
    <property type="entry name" value="60S ribosomal protein L11"/>
    <property type="match status" value="1"/>
</dbReference>
<dbReference type="Gene3D" id="3.30.1440.10">
    <property type="match status" value="1"/>
</dbReference>
<dbReference type="InterPro" id="IPR002132">
    <property type="entry name" value="Ribosomal_uL5"/>
</dbReference>
<dbReference type="InterPro" id="IPR031309">
    <property type="entry name" value="Ribosomal_uL5_C"/>
</dbReference>
<dbReference type="InterPro" id="IPR020929">
    <property type="entry name" value="Ribosomal_uL5_CS"/>
</dbReference>
<dbReference type="InterPro" id="IPR022803">
    <property type="entry name" value="Ribosomal_uL5_dom_sf"/>
</dbReference>
<dbReference type="InterPro" id="IPR031310">
    <property type="entry name" value="Ribosomal_uL5_N"/>
</dbReference>
<dbReference type="NCBIfam" id="NF003258">
    <property type="entry name" value="PRK04219.1"/>
    <property type="match status" value="1"/>
</dbReference>
<dbReference type="PANTHER" id="PTHR11994">
    <property type="entry name" value="60S RIBOSOMAL PROTEIN L11-RELATED"/>
    <property type="match status" value="1"/>
</dbReference>
<dbReference type="Pfam" id="PF00281">
    <property type="entry name" value="Ribosomal_L5"/>
    <property type="match status" value="1"/>
</dbReference>
<dbReference type="Pfam" id="PF00673">
    <property type="entry name" value="Ribosomal_L5_C"/>
    <property type="match status" value="1"/>
</dbReference>
<dbReference type="PIRSF" id="PIRSF002161">
    <property type="entry name" value="Ribosomal_L5"/>
    <property type="match status" value="1"/>
</dbReference>
<dbReference type="SUPFAM" id="SSF55282">
    <property type="entry name" value="RL5-like"/>
    <property type="match status" value="1"/>
</dbReference>
<dbReference type="PROSITE" id="PS00358">
    <property type="entry name" value="RIBOSOMAL_L5"/>
    <property type="match status" value="1"/>
</dbReference>
<protein>
    <recommendedName>
        <fullName evidence="2">Large ribosomal subunit protein uL5</fullName>
    </recommendedName>
    <alternativeName>
        <fullName>60S ribosomal protein L11</fullName>
    </alternativeName>
    <alternativeName>
        <fullName>L5</fullName>
    </alternativeName>
</protein>
<comment type="function">
    <text evidence="1">Component of the ribosome, a large ribonucleoprotein complex responsible for the synthesis of proteins in the cell. The small ribosomal subunit (SSU) binds messenger RNAs (mRNAs) and translates the encoded message by selecting cognate aminoacyl-transfer RNA (tRNA) molecules. The large subunit (LSU) contains the ribosomal catalytic site termed the peptidyl transferase center (PTC), which catalyzes the formation of peptide bonds, thereby polymerizing the amino acids delivered by tRNAs into a polypeptide chain. The nascent polypeptides leave the ribosome through a tunnel in the LSU and interact with protein factors that function in enzymatic processing, targeting, and the membrane insertion of nascent chains at the exit of the ribosomal tunnel.</text>
</comment>
<comment type="subunit">
    <text evidence="1">Component of the large ribosomal subunit.</text>
</comment>
<comment type="subcellular location">
    <subcellularLocation>
        <location evidence="1">Nucleus</location>
    </subcellularLocation>
    <subcellularLocation>
        <location evidence="1">Cytoplasm</location>
    </subcellularLocation>
</comment>
<comment type="similarity">
    <text evidence="2">Belongs to the universal ribosomal protein uL5 family.</text>
</comment>
<evidence type="ECO:0000250" key="1">
    <source>
        <dbReference type="UniProtKB" id="P0C0W9"/>
    </source>
</evidence>
<evidence type="ECO:0000305" key="2"/>